<proteinExistence type="inferred from homology"/>
<gene>
    <name type="primary">rpl2-A</name>
</gene>
<gene>
    <name type="primary">rpl2-B</name>
</gene>
<reference key="1">
    <citation type="journal article" date="2000" name="DNA Res.">
        <title>Complete structure of the chloroplast genome of a legume, Lotus japonicus.</title>
        <authorList>
            <person name="Kato T."/>
            <person name="Kaneko T."/>
            <person name="Sato S."/>
            <person name="Nakamura Y."/>
            <person name="Tabata S."/>
        </authorList>
    </citation>
    <scope>NUCLEOTIDE SEQUENCE [LARGE SCALE GENOMIC DNA]</scope>
    <source>
        <strain>cv. Miyakojima MG-20</strain>
    </source>
</reference>
<dbReference type="EMBL" id="AP002983">
    <property type="protein sequence ID" value="BAB33236.1"/>
    <property type="molecule type" value="Genomic_DNA"/>
</dbReference>
<dbReference type="EMBL" id="AP002983">
    <property type="protein sequence ID" value="BAB33258.1"/>
    <property type="molecule type" value="Genomic_DNA"/>
</dbReference>
<dbReference type="SMR" id="Q9B1H9"/>
<dbReference type="GO" id="GO:0009507">
    <property type="term" value="C:chloroplast"/>
    <property type="evidence" value="ECO:0007669"/>
    <property type="project" value="UniProtKB-SubCell"/>
</dbReference>
<dbReference type="GO" id="GO:0005762">
    <property type="term" value="C:mitochondrial large ribosomal subunit"/>
    <property type="evidence" value="ECO:0007669"/>
    <property type="project" value="TreeGrafter"/>
</dbReference>
<dbReference type="GO" id="GO:0019843">
    <property type="term" value="F:rRNA binding"/>
    <property type="evidence" value="ECO:0007669"/>
    <property type="project" value="UniProtKB-UniRule"/>
</dbReference>
<dbReference type="GO" id="GO:0003735">
    <property type="term" value="F:structural constituent of ribosome"/>
    <property type="evidence" value="ECO:0007669"/>
    <property type="project" value="InterPro"/>
</dbReference>
<dbReference type="GO" id="GO:0016740">
    <property type="term" value="F:transferase activity"/>
    <property type="evidence" value="ECO:0007669"/>
    <property type="project" value="InterPro"/>
</dbReference>
<dbReference type="GO" id="GO:0032543">
    <property type="term" value="P:mitochondrial translation"/>
    <property type="evidence" value="ECO:0007669"/>
    <property type="project" value="TreeGrafter"/>
</dbReference>
<dbReference type="FunFam" id="4.10.950.10:FF:000001">
    <property type="entry name" value="50S ribosomal protein L2"/>
    <property type="match status" value="1"/>
</dbReference>
<dbReference type="FunFam" id="2.30.30.30:FF:000008">
    <property type="entry name" value="50S ribosomal protein L2, chloroplastic"/>
    <property type="match status" value="1"/>
</dbReference>
<dbReference type="FunFam" id="2.40.50.140:FF:000029">
    <property type="entry name" value="50S ribosomal protein L2, chloroplastic"/>
    <property type="match status" value="1"/>
</dbReference>
<dbReference type="Gene3D" id="2.30.30.30">
    <property type="match status" value="1"/>
</dbReference>
<dbReference type="Gene3D" id="2.40.50.140">
    <property type="entry name" value="Nucleic acid-binding proteins"/>
    <property type="match status" value="1"/>
</dbReference>
<dbReference type="Gene3D" id="4.10.950.10">
    <property type="entry name" value="Ribosomal protein L2, domain 3"/>
    <property type="match status" value="1"/>
</dbReference>
<dbReference type="HAMAP" id="MF_01320_B">
    <property type="entry name" value="Ribosomal_uL2_B"/>
    <property type="match status" value="1"/>
</dbReference>
<dbReference type="InterPro" id="IPR012340">
    <property type="entry name" value="NA-bd_OB-fold"/>
</dbReference>
<dbReference type="InterPro" id="IPR014722">
    <property type="entry name" value="Rib_uL2_dom2"/>
</dbReference>
<dbReference type="InterPro" id="IPR002171">
    <property type="entry name" value="Ribosomal_uL2"/>
</dbReference>
<dbReference type="InterPro" id="IPR005880">
    <property type="entry name" value="Ribosomal_uL2_bac/org-type"/>
</dbReference>
<dbReference type="InterPro" id="IPR022669">
    <property type="entry name" value="Ribosomal_uL2_C"/>
</dbReference>
<dbReference type="InterPro" id="IPR022671">
    <property type="entry name" value="Ribosomal_uL2_CS"/>
</dbReference>
<dbReference type="InterPro" id="IPR014726">
    <property type="entry name" value="Ribosomal_uL2_dom3"/>
</dbReference>
<dbReference type="InterPro" id="IPR022666">
    <property type="entry name" value="Ribosomal_uL2_RNA-bd_dom"/>
</dbReference>
<dbReference type="InterPro" id="IPR008991">
    <property type="entry name" value="Translation_prot_SH3-like_sf"/>
</dbReference>
<dbReference type="NCBIfam" id="TIGR01171">
    <property type="entry name" value="rplB_bact"/>
    <property type="match status" value="1"/>
</dbReference>
<dbReference type="PANTHER" id="PTHR13691:SF5">
    <property type="entry name" value="LARGE RIBOSOMAL SUBUNIT PROTEIN UL2M"/>
    <property type="match status" value="1"/>
</dbReference>
<dbReference type="PANTHER" id="PTHR13691">
    <property type="entry name" value="RIBOSOMAL PROTEIN L2"/>
    <property type="match status" value="1"/>
</dbReference>
<dbReference type="Pfam" id="PF00181">
    <property type="entry name" value="Ribosomal_L2"/>
    <property type="match status" value="1"/>
</dbReference>
<dbReference type="Pfam" id="PF03947">
    <property type="entry name" value="Ribosomal_L2_C"/>
    <property type="match status" value="1"/>
</dbReference>
<dbReference type="PIRSF" id="PIRSF002158">
    <property type="entry name" value="Ribosomal_L2"/>
    <property type="match status" value="1"/>
</dbReference>
<dbReference type="SMART" id="SM01383">
    <property type="entry name" value="Ribosomal_L2"/>
    <property type="match status" value="1"/>
</dbReference>
<dbReference type="SMART" id="SM01382">
    <property type="entry name" value="Ribosomal_L2_C"/>
    <property type="match status" value="1"/>
</dbReference>
<dbReference type="SUPFAM" id="SSF50249">
    <property type="entry name" value="Nucleic acid-binding proteins"/>
    <property type="match status" value="1"/>
</dbReference>
<dbReference type="SUPFAM" id="SSF50104">
    <property type="entry name" value="Translation proteins SH3-like domain"/>
    <property type="match status" value="1"/>
</dbReference>
<dbReference type="PROSITE" id="PS00467">
    <property type="entry name" value="RIBOSOMAL_L2"/>
    <property type="match status" value="1"/>
</dbReference>
<protein>
    <recommendedName>
        <fullName evidence="2">Large ribosomal subunit protein uL2cz/uL2cy</fullName>
    </recommendedName>
    <alternativeName>
        <fullName evidence="4">50S ribosomal protein L2, chloroplastic</fullName>
    </alternativeName>
</protein>
<sequence>MAIHLYKTSTPSTRNRAVDSQVKSNPRNRLIYGLHCCSKGRNARGIITAGHRGGGHKRLYRKIDFRRNEKNIYGKIVTIEYDPNRNAYICLIHYGDGEKRYILHPRGAIIGDTIVSGTEVPIKMGNALPLTDMPLGTAIHNIEITFGKGGKLARAAGAVAKLIAKEGKSATLKLPSGEVRLISKNCSATVGQVGNVGVNQKSLGRAGSKCWLGKRPVVRGVVMNPVDHPHGGGEGRAPIGRKKPVTPWGYPALGRRSRKRKKYSDNLILRRRTK</sequence>
<feature type="chain" id="PRO_0000129680" description="Large ribosomal subunit protein uL2cz/uL2cy">
    <location>
        <begin position="1"/>
        <end position="274"/>
    </location>
</feature>
<feature type="region of interest" description="Disordered" evidence="3">
    <location>
        <begin position="225"/>
        <end position="274"/>
    </location>
</feature>
<accession>Q9B1H9</accession>
<geneLocation type="chloroplast"/>
<comment type="subunit">
    <text evidence="1">Part of the 50S ribosomal subunit.</text>
</comment>
<comment type="subcellular location">
    <subcellularLocation>
        <location>Plastid</location>
        <location>Chloroplast</location>
    </subcellularLocation>
</comment>
<comment type="similarity">
    <text evidence="4">Belongs to the universal ribosomal protein uL2 family.</text>
</comment>
<evidence type="ECO:0000250" key="1"/>
<evidence type="ECO:0000255" key="2">
    <source>
        <dbReference type="HAMAP-Rule" id="MF_01320"/>
    </source>
</evidence>
<evidence type="ECO:0000256" key="3">
    <source>
        <dbReference type="SAM" id="MobiDB-lite"/>
    </source>
</evidence>
<evidence type="ECO:0000305" key="4"/>
<name>RK2_LOTJA</name>
<keyword id="KW-0150">Chloroplast</keyword>
<keyword id="KW-0934">Plastid</keyword>
<keyword id="KW-0687">Ribonucleoprotein</keyword>
<keyword id="KW-0689">Ribosomal protein</keyword>
<organism>
    <name type="scientific">Lotus japonicus</name>
    <name type="common">Lotus corniculatus var. japonicus</name>
    <dbReference type="NCBI Taxonomy" id="34305"/>
    <lineage>
        <taxon>Eukaryota</taxon>
        <taxon>Viridiplantae</taxon>
        <taxon>Streptophyta</taxon>
        <taxon>Embryophyta</taxon>
        <taxon>Tracheophyta</taxon>
        <taxon>Spermatophyta</taxon>
        <taxon>Magnoliopsida</taxon>
        <taxon>eudicotyledons</taxon>
        <taxon>Gunneridae</taxon>
        <taxon>Pentapetalae</taxon>
        <taxon>rosids</taxon>
        <taxon>fabids</taxon>
        <taxon>Fabales</taxon>
        <taxon>Fabaceae</taxon>
        <taxon>Papilionoideae</taxon>
        <taxon>50 kb inversion clade</taxon>
        <taxon>NPAAA clade</taxon>
        <taxon>Hologalegina</taxon>
        <taxon>robinioid clade</taxon>
        <taxon>Loteae</taxon>
        <taxon>Lotus</taxon>
    </lineage>
</organism>